<name>DPS_YERE8</name>
<gene>
    <name evidence="1" type="primary">dps</name>
    <name type="ordered locus">YE2843</name>
</gene>
<comment type="function">
    <text evidence="1">During stationary phase, binds the chromosome non-specifically, forming a highly ordered and stable dps-DNA co-crystal within which chromosomal DNA is condensed and protected from diverse damages. It protects DNA from oxidative damage by sequestering intracellular Fe(2+) ion and storing it in the form of Fe(3+) oxyhydroxide mineral, which can be released after reduction. One hydrogen peroxide oxidizes two Fe(2+) ions, which prevents hydroxyl radical production by the Fenton reaction.</text>
</comment>
<comment type="catalytic activity">
    <reaction evidence="1">
        <text>2 Fe(2+) + H2O2 + 2 H(+) = 2 Fe(3+) + 2 H2O</text>
        <dbReference type="Rhea" id="RHEA:48712"/>
        <dbReference type="ChEBI" id="CHEBI:15377"/>
        <dbReference type="ChEBI" id="CHEBI:15378"/>
        <dbReference type="ChEBI" id="CHEBI:16240"/>
        <dbReference type="ChEBI" id="CHEBI:29033"/>
        <dbReference type="ChEBI" id="CHEBI:29034"/>
    </reaction>
</comment>
<comment type="subunit">
    <text evidence="1">Homododecamer. The 12 subunits form a hollow sphere into which the mineral iron core of up to 500 Fe(3+) can be deposited.</text>
</comment>
<comment type="subcellular location">
    <subcellularLocation>
        <location evidence="1">Cytoplasm</location>
    </subcellularLocation>
</comment>
<comment type="similarity">
    <text evidence="1">Belongs to the Dps family.</text>
</comment>
<sequence>MSTAKLVKAKSSELIYTRNDVDEHTKTLTIKLLNELVIQFIDLSLITKQAHWNMRGANFIAVHEMLDGFRTTINDHLDTFAERAVQLGGIALGTAQLVTEKTPLESYPTRIHSVQDHLKELADRYGVVANFVRKAITEVKDEDSADMFTAASRDLDKFLWFLEANLENQ</sequence>
<feature type="chain" id="PRO_1000024418" description="DNA protection during starvation protein">
    <location>
        <begin position="1"/>
        <end position="169"/>
    </location>
</feature>
<feature type="binding site" evidence="1">
    <location>
        <position position="51"/>
    </location>
    <ligand>
        <name>Fe cation</name>
        <dbReference type="ChEBI" id="CHEBI:24875"/>
    </ligand>
</feature>
<feature type="binding site" evidence="1">
    <location>
        <position position="78"/>
    </location>
    <ligand>
        <name>Fe cation</name>
        <dbReference type="ChEBI" id="CHEBI:24875"/>
    </ligand>
</feature>
<feature type="binding site" evidence="1">
    <location>
        <position position="82"/>
    </location>
    <ligand>
        <name>Fe cation</name>
        <dbReference type="ChEBI" id="CHEBI:24875"/>
    </ligand>
</feature>
<protein>
    <recommendedName>
        <fullName evidence="1">DNA protection during starvation protein</fullName>
        <ecNumber evidence="1">1.16.-.-</ecNumber>
    </recommendedName>
</protein>
<accession>A1JU34</accession>
<proteinExistence type="inferred from homology"/>
<keyword id="KW-0963">Cytoplasm</keyword>
<keyword id="KW-0226">DNA condensation</keyword>
<keyword id="KW-0238">DNA-binding</keyword>
<keyword id="KW-0408">Iron</keyword>
<keyword id="KW-0409">Iron storage</keyword>
<keyword id="KW-0479">Metal-binding</keyword>
<keyword id="KW-0560">Oxidoreductase</keyword>
<organism>
    <name type="scientific">Yersinia enterocolitica serotype O:8 / biotype 1B (strain NCTC 13174 / 8081)</name>
    <dbReference type="NCBI Taxonomy" id="393305"/>
    <lineage>
        <taxon>Bacteria</taxon>
        <taxon>Pseudomonadati</taxon>
        <taxon>Pseudomonadota</taxon>
        <taxon>Gammaproteobacteria</taxon>
        <taxon>Enterobacterales</taxon>
        <taxon>Yersiniaceae</taxon>
        <taxon>Yersinia</taxon>
    </lineage>
</organism>
<dbReference type="EC" id="1.16.-.-" evidence="1"/>
<dbReference type="EMBL" id="AM286415">
    <property type="protein sequence ID" value="CAL12876.1"/>
    <property type="molecule type" value="Genomic_DNA"/>
</dbReference>
<dbReference type="RefSeq" id="WP_011816761.1">
    <property type="nucleotide sequence ID" value="NC_008800.1"/>
</dbReference>
<dbReference type="RefSeq" id="YP_001007032.1">
    <property type="nucleotide sequence ID" value="NC_008800.1"/>
</dbReference>
<dbReference type="SMR" id="A1JU34"/>
<dbReference type="KEGG" id="yen:YE2843"/>
<dbReference type="PATRIC" id="fig|393305.7.peg.3018"/>
<dbReference type="eggNOG" id="COG0783">
    <property type="taxonomic scope" value="Bacteria"/>
</dbReference>
<dbReference type="HOGENOM" id="CLU_098183_1_2_6"/>
<dbReference type="OrthoDB" id="9797687at2"/>
<dbReference type="Proteomes" id="UP000000642">
    <property type="component" value="Chromosome"/>
</dbReference>
<dbReference type="GO" id="GO:0005737">
    <property type="term" value="C:cytoplasm"/>
    <property type="evidence" value="ECO:0007669"/>
    <property type="project" value="UniProtKB-SubCell"/>
</dbReference>
<dbReference type="GO" id="GO:0003677">
    <property type="term" value="F:DNA binding"/>
    <property type="evidence" value="ECO:0007669"/>
    <property type="project" value="UniProtKB-UniRule"/>
</dbReference>
<dbReference type="GO" id="GO:0008199">
    <property type="term" value="F:ferric iron binding"/>
    <property type="evidence" value="ECO:0007669"/>
    <property type="project" value="UniProtKB-UniRule"/>
</dbReference>
<dbReference type="GO" id="GO:0016722">
    <property type="term" value="F:oxidoreductase activity, acting on metal ions"/>
    <property type="evidence" value="ECO:0007669"/>
    <property type="project" value="InterPro"/>
</dbReference>
<dbReference type="GO" id="GO:0030261">
    <property type="term" value="P:chromosome condensation"/>
    <property type="evidence" value="ECO:0007669"/>
    <property type="project" value="UniProtKB-KW"/>
</dbReference>
<dbReference type="GO" id="GO:0006879">
    <property type="term" value="P:intracellular iron ion homeostasis"/>
    <property type="evidence" value="ECO:0007669"/>
    <property type="project" value="UniProtKB-KW"/>
</dbReference>
<dbReference type="CDD" id="cd01043">
    <property type="entry name" value="DPS"/>
    <property type="match status" value="1"/>
</dbReference>
<dbReference type="Gene3D" id="1.20.1260.10">
    <property type="match status" value="1"/>
</dbReference>
<dbReference type="HAMAP" id="MF_01441">
    <property type="entry name" value="Dps"/>
    <property type="match status" value="1"/>
</dbReference>
<dbReference type="InterPro" id="IPR002177">
    <property type="entry name" value="DPS_DNA-bd"/>
</dbReference>
<dbReference type="InterPro" id="IPR023188">
    <property type="entry name" value="DPS_DNA-bd_CS"/>
</dbReference>
<dbReference type="InterPro" id="IPR023067">
    <property type="entry name" value="Dps_gammaproteobac"/>
</dbReference>
<dbReference type="InterPro" id="IPR012347">
    <property type="entry name" value="Ferritin-like"/>
</dbReference>
<dbReference type="InterPro" id="IPR009078">
    <property type="entry name" value="Ferritin-like_SF"/>
</dbReference>
<dbReference type="InterPro" id="IPR008331">
    <property type="entry name" value="Ferritin_DPS_dom"/>
</dbReference>
<dbReference type="NCBIfam" id="NF006975">
    <property type="entry name" value="PRK09448.1"/>
    <property type="match status" value="1"/>
</dbReference>
<dbReference type="PANTHER" id="PTHR42932:SF3">
    <property type="entry name" value="DNA PROTECTION DURING STARVATION PROTEIN"/>
    <property type="match status" value="1"/>
</dbReference>
<dbReference type="PANTHER" id="PTHR42932">
    <property type="entry name" value="GENERAL STRESS PROTEIN 20U"/>
    <property type="match status" value="1"/>
</dbReference>
<dbReference type="Pfam" id="PF00210">
    <property type="entry name" value="Ferritin"/>
    <property type="match status" value="1"/>
</dbReference>
<dbReference type="PIRSF" id="PIRSF005900">
    <property type="entry name" value="Dps"/>
    <property type="match status" value="1"/>
</dbReference>
<dbReference type="PRINTS" id="PR01346">
    <property type="entry name" value="HELNAPAPROT"/>
</dbReference>
<dbReference type="SUPFAM" id="SSF47240">
    <property type="entry name" value="Ferritin-like"/>
    <property type="match status" value="1"/>
</dbReference>
<dbReference type="PROSITE" id="PS00818">
    <property type="entry name" value="DPS_1"/>
    <property type="match status" value="1"/>
</dbReference>
<reference key="1">
    <citation type="journal article" date="2006" name="PLoS Genet.">
        <title>The complete genome sequence and comparative genome analysis of the high pathogenicity Yersinia enterocolitica strain 8081.</title>
        <authorList>
            <person name="Thomson N.R."/>
            <person name="Howard S."/>
            <person name="Wren B.W."/>
            <person name="Holden M.T.G."/>
            <person name="Crossman L."/>
            <person name="Challis G.L."/>
            <person name="Churcher C."/>
            <person name="Mungall K."/>
            <person name="Brooks K."/>
            <person name="Chillingworth T."/>
            <person name="Feltwell T."/>
            <person name="Abdellah Z."/>
            <person name="Hauser H."/>
            <person name="Jagels K."/>
            <person name="Maddison M."/>
            <person name="Moule S."/>
            <person name="Sanders M."/>
            <person name="Whitehead S."/>
            <person name="Quail M.A."/>
            <person name="Dougan G."/>
            <person name="Parkhill J."/>
            <person name="Prentice M.B."/>
        </authorList>
    </citation>
    <scope>NUCLEOTIDE SEQUENCE [LARGE SCALE GENOMIC DNA]</scope>
    <source>
        <strain>NCTC 13174 / 8081</strain>
    </source>
</reference>
<evidence type="ECO:0000255" key="1">
    <source>
        <dbReference type="HAMAP-Rule" id="MF_01441"/>
    </source>
</evidence>